<evidence type="ECO:0000255" key="1">
    <source>
        <dbReference type="HAMAP-Rule" id="MF_00500"/>
    </source>
</evidence>
<evidence type="ECO:0000256" key="2">
    <source>
        <dbReference type="SAM" id="MobiDB-lite"/>
    </source>
</evidence>
<evidence type="ECO:0000305" key="3"/>
<gene>
    <name evidence="1" type="primary">rpsT</name>
    <name type="ordered locus">BCB4264_A4441</name>
</gene>
<reference key="1">
    <citation type="submission" date="2008-10" db="EMBL/GenBank/DDBJ databases">
        <title>Genome sequence of Bacillus cereus B4264.</title>
        <authorList>
            <person name="Dodson R.J."/>
            <person name="Durkin A.S."/>
            <person name="Rosovitz M.J."/>
            <person name="Rasko D.A."/>
            <person name="Hoffmaster A."/>
            <person name="Ravel J."/>
            <person name="Sutton G."/>
        </authorList>
    </citation>
    <scope>NUCLEOTIDE SEQUENCE [LARGE SCALE GENOMIC DNA]</scope>
    <source>
        <strain>B4264</strain>
    </source>
</reference>
<dbReference type="EMBL" id="CP001176">
    <property type="protein sequence ID" value="ACK64034.1"/>
    <property type="molecule type" value="Genomic_DNA"/>
</dbReference>
<dbReference type="RefSeq" id="WP_001274011.1">
    <property type="nucleotide sequence ID" value="NZ_VEHB01000006.1"/>
</dbReference>
<dbReference type="SMR" id="B7HCU8"/>
<dbReference type="GeneID" id="93006778"/>
<dbReference type="KEGG" id="bcb:BCB4264_A4441"/>
<dbReference type="HOGENOM" id="CLU_160655_1_0_9"/>
<dbReference type="Proteomes" id="UP000007096">
    <property type="component" value="Chromosome"/>
</dbReference>
<dbReference type="GO" id="GO:0005829">
    <property type="term" value="C:cytosol"/>
    <property type="evidence" value="ECO:0007669"/>
    <property type="project" value="TreeGrafter"/>
</dbReference>
<dbReference type="GO" id="GO:0015935">
    <property type="term" value="C:small ribosomal subunit"/>
    <property type="evidence" value="ECO:0007669"/>
    <property type="project" value="TreeGrafter"/>
</dbReference>
<dbReference type="GO" id="GO:0070181">
    <property type="term" value="F:small ribosomal subunit rRNA binding"/>
    <property type="evidence" value="ECO:0007669"/>
    <property type="project" value="TreeGrafter"/>
</dbReference>
<dbReference type="GO" id="GO:0003735">
    <property type="term" value="F:structural constituent of ribosome"/>
    <property type="evidence" value="ECO:0007669"/>
    <property type="project" value="InterPro"/>
</dbReference>
<dbReference type="GO" id="GO:0006412">
    <property type="term" value="P:translation"/>
    <property type="evidence" value="ECO:0007669"/>
    <property type="project" value="UniProtKB-UniRule"/>
</dbReference>
<dbReference type="FunFam" id="1.20.58.110:FF:000001">
    <property type="entry name" value="30S ribosomal protein S20"/>
    <property type="match status" value="1"/>
</dbReference>
<dbReference type="Gene3D" id="1.20.58.110">
    <property type="entry name" value="Ribosomal protein S20"/>
    <property type="match status" value="1"/>
</dbReference>
<dbReference type="HAMAP" id="MF_00500">
    <property type="entry name" value="Ribosomal_bS20"/>
    <property type="match status" value="1"/>
</dbReference>
<dbReference type="InterPro" id="IPR002583">
    <property type="entry name" value="Ribosomal_bS20"/>
</dbReference>
<dbReference type="InterPro" id="IPR036510">
    <property type="entry name" value="Ribosomal_bS20_sf"/>
</dbReference>
<dbReference type="NCBIfam" id="TIGR00029">
    <property type="entry name" value="S20"/>
    <property type="match status" value="1"/>
</dbReference>
<dbReference type="PANTHER" id="PTHR33398">
    <property type="entry name" value="30S RIBOSOMAL PROTEIN S20"/>
    <property type="match status" value="1"/>
</dbReference>
<dbReference type="PANTHER" id="PTHR33398:SF1">
    <property type="entry name" value="SMALL RIBOSOMAL SUBUNIT PROTEIN BS20C"/>
    <property type="match status" value="1"/>
</dbReference>
<dbReference type="Pfam" id="PF01649">
    <property type="entry name" value="Ribosomal_S20p"/>
    <property type="match status" value="1"/>
</dbReference>
<dbReference type="SUPFAM" id="SSF46992">
    <property type="entry name" value="Ribosomal protein S20"/>
    <property type="match status" value="1"/>
</dbReference>
<proteinExistence type="inferred from homology"/>
<sequence length="85" mass="9342">MANIKSAIKRAKLSEERRAHNASIKSDMRSAVKTVEALVTNNDLENAKEAFKTASKKLDKAARKGLIHQNAAARQKSRLAKQVNA</sequence>
<keyword id="KW-0687">Ribonucleoprotein</keyword>
<keyword id="KW-0689">Ribosomal protein</keyword>
<keyword id="KW-0694">RNA-binding</keyword>
<keyword id="KW-0699">rRNA-binding</keyword>
<accession>B7HCU8</accession>
<name>RS20_BACC4</name>
<protein>
    <recommendedName>
        <fullName evidence="1">Small ribosomal subunit protein bS20</fullName>
    </recommendedName>
    <alternativeName>
        <fullName evidence="3">30S ribosomal protein S20</fullName>
    </alternativeName>
</protein>
<organism>
    <name type="scientific">Bacillus cereus (strain B4264)</name>
    <dbReference type="NCBI Taxonomy" id="405532"/>
    <lineage>
        <taxon>Bacteria</taxon>
        <taxon>Bacillati</taxon>
        <taxon>Bacillota</taxon>
        <taxon>Bacilli</taxon>
        <taxon>Bacillales</taxon>
        <taxon>Bacillaceae</taxon>
        <taxon>Bacillus</taxon>
        <taxon>Bacillus cereus group</taxon>
    </lineage>
</organism>
<feature type="chain" id="PRO_1000126399" description="Small ribosomal subunit protein bS20">
    <location>
        <begin position="1"/>
        <end position="85"/>
    </location>
</feature>
<feature type="region of interest" description="Disordered" evidence="2">
    <location>
        <begin position="1"/>
        <end position="25"/>
    </location>
</feature>
<comment type="function">
    <text evidence="1">Binds directly to 16S ribosomal RNA.</text>
</comment>
<comment type="similarity">
    <text evidence="1">Belongs to the bacterial ribosomal protein bS20 family.</text>
</comment>